<comment type="similarity">
    <text evidence="1">Belongs to the Smg family.</text>
</comment>
<proteinExistence type="inferred from homology"/>
<evidence type="ECO:0000255" key="1">
    <source>
        <dbReference type="HAMAP-Rule" id="MF_00598"/>
    </source>
</evidence>
<reference key="1">
    <citation type="journal article" date="2002" name="Science">
        <title>50 million years of genomic stasis in endosymbiotic bacteria.</title>
        <authorList>
            <person name="Tamas I."/>
            <person name="Klasson L."/>
            <person name="Canbaeck B."/>
            <person name="Naeslund A.K."/>
            <person name="Eriksson A.-S."/>
            <person name="Wernegreen J.J."/>
            <person name="Sandstroem J.P."/>
            <person name="Moran N.A."/>
            <person name="Andersson S.G.E."/>
        </authorList>
    </citation>
    <scope>NUCLEOTIDE SEQUENCE [LARGE SCALE GENOMIC DNA]</scope>
    <source>
        <strain>Sg</strain>
    </source>
</reference>
<feature type="chain" id="PRO_0000209165" description="Protein Smg">
    <location>
        <begin position="1"/>
        <end position="157"/>
    </location>
</feature>
<protein>
    <recommendedName>
        <fullName evidence="1">Protein Smg</fullName>
    </recommendedName>
</protein>
<dbReference type="EMBL" id="AE013218">
    <property type="protein sequence ID" value="AAM68019.1"/>
    <property type="molecule type" value="Genomic_DNA"/>
</dbReference>
<dbReference type="RefSeq" id="WP_011053985.1">
    <property type="nucleotide sequence ID" value="NC_004061.1"/>
</dbReference>
<dbReference type="SMR" id="Q8K976"/>
<dbReference type="STRING" id="198804.BUsg_476"/>
<dbReference type="GeneID" id="93003951"/>
<dbReference type="KEGG" id="bas:BUsg_476"/>
<dbReference type="eggNOG" id="COG2922">
    <property type="taxonomic scope" value="Bacteria"/>
</dbReference>
<dbReference type="HOGENOM" id="CLU_133242_0_0_6"/>
<dbReference type="Proteomes" id="UP000000416">
    <property type="component" value="Chromosome"/>
</dbReference>
<dbReference type="HAMAP" id="MF_00598">
    <property type="entry name" value="Smg"/>
    <property type="match status" value="1"/>
</dbReference>
<dbReference type="InterPro" id="IPR007456">
    <property type="entry name" value="Smg"/>
</dbReference>
<dbReference type="PANTHER" id="PTHR38692">
    <property type="entry name" value="PROTEIN SMG"/>
    <property type="match status" value="1"/>
</dbReference>
<dbReference type="PANTHER" id="PTHR38692:SF1">
    <property type="entry name" value="PROTEIN SMG"/>
    <property type="match status" value="1"/>
</dbReference>
<dbReference type="Pfam" id="PF04361">
    <property type="entry name" value="DUF494"/>
    <property type="match status" value="1"/>
</dbReference>
<name>SMG_BUCAP</name>
<gene>
    <name evidence="1" type="primary">smg</name>
    <name type="ordered locus">BUsg_476</name>
</gene>
<sequence length="157" mass="18568">MFEVLIYLFETYVHSGSEISIDYKNLTSDLSDIGFRSKDIYKALHWLKNLSCCKKNIFSSINLSLNHTTNRIYTKKEEFKLNSDCRGFILFLEELEILTLNTREIIIERIMALDISHVNIEDLKWIVLIILFNIPGCEVVYRKLENLLFNFKKEIVH</sequence>
<accession>Q8K976</accession>
<organism>
    <name type="scientific">Buchnera aphidicola subsp. Schizaphis graminum (strain Sg)</name>
    <dbReference type="NCBI Taxonomy" id="198804"/>
    <lineage>
        <taxon>Bacteria</taxon>
        <taxon>Pseudomonadati</taxon>
        <taxon>Pseudomonadota</taxon>
        <taxon>Gammaproteobacteria</taxon>
        <taxon>Enterobacterales</taxon>
        <taxon>Erwiniaceae</taxon>
        <taxon>Buchnera</taxon>
    </lineage>
</organism>